<sequence>MTKSVIKTVEWSDEGVVLVDQTKLPTEEVYVTCGTYEEVAVAIKDMIVRGAPAIGVTAAMGIALGVRDAKASTLSELRQMFGMICRTMGETRPTAVNLFWAIRRMQRKFEELSNMPLAVIKAEMVFEAKRIHLEDIAANQAMGRNGAVLMPSEGGVLTHCNAGALATAGYGTALGVIRAAVESGKNIRVFADETRPFLQGARLTAWELMKDGIDTTVISDNMAGAMMAQGKIQAVVVGADRIAANGDVANKIGTYTVAVLAKEHGIPFYVAAPWSTIDLDTPDGSKIPIEQRNGREVTHIAGKQMTPDNVRIENPAFDVTPSKYVTAIITERGVAKAPYDESLRKLAETETVSA</sequence>
<comment type="function">
    <text evidence="1">Catalyzes the interconversion of methylthioribose-1-phosphate (MTR-1-P) into methylthioribulose-1-phosphate (MTRu-1-P).</text>
</comment>
<comment type="catalytic activity">
    <reaction evidence="1">
        <text>5-(methylsulfanyl)-alpha-D-ribose 1-phosphate = 5-(methylsulfanyl)-D-ribulose 1-phosphate</text>
        <dbReference type="Rhea" id="RHEA:19989"/>
        <dbReference type="ChEBI" id="CHEBI:58533"/>
        <dbReference type="ChEBI" id="CHEBI:58548"/>
        <dbReference type="EC" id="5.3.1.23"/>
    </reaction>
</comment>
<comment type="pathway">
    <text evidence="1">Amino-acid biosynthesis; L-methionine biosynthesis via salvage pathway; L-methionine from S-methyl-5-thio-alpha-D-ribose 1-phosphate: step 1/6.</text>
</comment>
<comment type="similarity">
    <text evidence="2">Belongs to the eIF-2B alpha/beta/delta subunits family. MtnA subfamily.</text>
</comment>
<gene>
    <name evidence="1" type="primary">mtnA</name>
    <name type="ordered locus">Acid345_1175</name>
</gene>
<feature type="chain" id="PRO_0000357132" description="Methylthioribose-1-phosphate isomerase">
    <location>
        <begin position="1"/>
        <end position="354"/>
    </location>
</feature>
<feature type="active site" description="Proton donor" evidence="1">
    <location>
        <position position="240"/>
    </location>
</feature>
<feature type="binding site" evidence="1">
    <location>
        <begin position="49"/>
        <end position="51"/>
    </location>
    <ligand>
        <name>substrate</name>
    </ligand>
</feature>
<feature type="binding site" evidence="1">
    <location>
        <position position="92"/>
    </location>
    <ligand>
        <name>substrate</name>
    </ligand>
</feature>
<feature type="binding site" evidence="1">
    <location>
        <position position="199"/>
    </location>
    <ligand>
        <name>substrate</name>
    </ligand>
</feature>
<feature type="binding site" evidence="1">
    <location>
        <begin position="250"/>
        <end position="251"/>
    </location>
    <ligand>
        <name>substrate</name>
    </ligand>
</feature>
<feature type="site" description="Transition state stabilizer" evidence="1">
    <location>
        <position position="160"/>
    </location>
</feature>
<dbReference type="EC" id="5.3.1.23" evidence="1"/>
<dbReference type="EMBL" id="CP000360">
    <property type="protein sequence ID" value="ABF40178.1"/>
    <property type="molecule type" value="Genomic_DNA"/>
</dbReference>
<dbReference type="RefSeq" id="WP_011521980.1">
    <property type="nucleotide sequence ID" value="NC_008009.1"/>
</dbReference>
<dbReference type="SMR" id="Q1ISH2"/>
<dbReference type="STRING" id="204669.Acid345_1175"/>
<dbReference type="EnsemblBacteria" id="ABF40178">
    <property type="protein sequence ID" value="ABF40178"/>
    <property type="gene ID" value="Acid345_1175"/>
</dbReference>
<dbReference type="KEGG" id="aba:Acid345_1175"/>
<dbReference type="eggNOG" id="COG0182">
    <property type="taxonomic scope" value="Bacteria"/>
</dbReference>
<dbReference type="HOGENOM" id="CLU_016218_1_2_0"/>
<dbReference type="OrthoDB" id="9803436at2"/>
<dbReference type="UniPathway" id="UPA00904">
    <property type="reaction ID" value="UER00874"/>
</dbReference>
<dbReference type="Proteomes" id="UP000002432">
    <property type="component" value="Chromosome"/>
</dbReference>
<dbReference type="GO" id="GO:0046523">
    <property type="term" value="F:S-methyl-5-thioribose-1-phosphate isomerase activity"/>
    <property type="evidence" value="ECO:0007669"/>
    <property type="project" value="UniProtKB-UniRule"/>
</dbReference>
<dbReference type="GO" id="GO:0019509">
    <property type="term" value="P:L-methionine salvage from methylthioadenosine"/>
    <property type="evidence" value="ECO:0007669"/>
    <property type="project" value="UniProtKB-UniRule"/>
</dbReference>
<dbReference type="FunFam" id="1.20.120.420:FF:000003">
    <property type="entry name" value="Methylthioribose-1-phosphate isomerase"/>
    <property type="match status" value="1"/>
</dbReference>
<dbReference type="FunFam" id="3.40.50.10470:FF:000010">
    <property type="entry name" value="Methylthioribose-1-phosphate isomerase"/>
    <property type="match status" value="1"/>
</dbReference>
<dbReference type="Gene3D" id="1.20.120.420">
    <property type="entry name" value="translation initiation factor eif-2b, domain 1"/>
    <property type="match status" value="1"/>
</dbReference>
<dbReference type="Gene3D" id="3.40.50.10470">
    <property type="entry name" value="Translation initiation factor eif-2b, domain 2"/>
    <property type="match status" value="1"/>
</dbReference>
<dbReference type="HAMAP" id="MF_01678">
    <property type="entry name" value="Salvage_MtnA"/>
    <property type="match status" value="1"/>
</dbReference>
<dbReference type="InterPro" id="IPR000649">
    <property type="entry name" value="IF-2B-related"/>
</dbReference>
<dbReference type="InterPro" id="IPR005251">
    <property type="entry name" value="IF-M1Pi"/>
</dbReference>
<dbReference type="InterPro" id="IPR042529">
    <property type="entry name" value="IF_2B-like_C"/>
</dbReference>
<dbReference type="InterPro" id="IPR011559">
    <property type="entry name" value="Initiation_fac_2B_a/b/d"/>
</dbReference>
<dbReference type="InterPro" id="IPR027363">
    <property type="entry name" value="M1Pi_N"/>
</dbReference>
<dbReference type="InterPro" id="IPR037171">
    <property type="entry name" value="NagB/RpiA_transferase-like"/>
</dbReference>
<dbReference type="NCBIfam" id="TIGR00524">
    <property type="entry name" value="eIF-2B_rel"/>
    <property type="match status" value="1"/>
</dbReference>
<dbReference type="NCBIfam" id="NF004326">
    <property type="entry name" value="PRK05720.1"/>
    <property type="match status" value="1"/>
</dbReference>
<dbReference type="NCBIfam" id="TIGR00512">
    <property type="entry name" value="salvage_mtnA"/>
    <property type="match status" value="1"/>
</dbReference>
<dbReference type="PANTHER" id="PTHR43475">
    <property type="entry name" value="METHYLTHIORIBOSE-1-PHOSPHATE ISOMERASE"/>
    <property type="match status" value="1"/>
</dbReference>
<dbReference type="PANTHER" id="PTHR43475:SF1">
    <property type="entry name" value="METHYLTHIORIBOSE-1-PHOSPHATE ISOMERASE"/>
    <property type="match status" value="1"/>
</dbReference>
<dbReference type="Pfam" id="PF01008">
    <property type="entry name" value="IF-2B"/>
    <property type="match status" value="1"/>
</dbReference>
<dbReference type="SUPFAM" id="SSF100950">
    <property type="entry name" value="NagB/RpiA/CoA transferase-like"/>
    <property type="match status" value="1"/>
</dbReference>
<name>MTNA_KORVE</name>
<keyword id="KW-0028">Amino-acid biosynthesis</keyword>
<keyword id="KW-0413">Isomerase</keyword>
<keyword id="KW-0486">Methionine biosynthesis</keyword>
<keyword id="KW-1185">Reference proteome</keyword>
<protein>
    <recommendedName>
        <fullName evidence="1">Methylthioribose-1-phosphate isomerase</fullName>
        <shortName evidence="1">M1Pi</shortName>
        <shortName evidence="1">MTR-1-P isomerase</shortName>
        <ecNumber evidence="1">5.3.1.23</ecNumber>
    </recommendedName>
    <alternativeName>
        <fullName evidence="1">S-methyl-5-thioribose-1-phosphate isomerase</fullName>
    </alternativeName>
</protein>
<proteinExistence type="inferred from homology"/>
<reference key="1">
    <citation type="journal article" date="2009" name="Appl. Environ. Microbiol.">
        <title>Three genomes from the phylum Acidobacteria provide insight into the lifestyles of these microorganisms in soils.</title>
        <authorList>
            <person name="Ward N.L."/>
            <person name="Challacombe J.F."/>
            <person name="Janssen P.H."/>
            <person name="Henrissat B."/>
            <person name="Coutinho P.M."/>
            <person name="Wu M."/>
            <person name="Xie G."/>
            <person name="Haft D.H."/>
            <person name="Sait M."/>
            <person name="Badger J."/>
            <person name="Barabote R.D."/>
            <person name="Bradley B."/>
            <person name="Brettin T.S."/>
            <person name="Brinkac L.M."/>
            <person name="Bruce D."/>
            <person name="Creasy T."/>
            <person name="Daugherty S.C."/>
            <person name="Davidsen T.M."/>
            <person name="DeBoy R.T."/>
            <person name="Detter J.C."/>
            <person name="Dodson R.J."/>
            <person name="Durkin A.S."/>
            <person name="Ganapathy A."/>
            <person name="Gwinn-Giglio M."/>
            <person name="Han C.S."/>
            <person name="Khouri H."/>
            <person name="Kiss H."/>
            <person name="Kothari S.P."/>
            <person name="Madupu R."/>
            <person name="Nelson K.E."/>
            <person name="Nelson W.C."/>
            <person name="Paulsen I."/>
            <person name="Penn K."/>
            <person name="Ren Q."/>
            <person name="Rosovitz M.J."/>
            <person name="Selengut J.D."/>
            <person name="Shrivastava S."/>
            <person name="Sullivan S.A."/>
            <person name="Tapia R."/>
            <person name="Thompson L.S."/>
            <person name="Watkins K.L."/>
            <person name="Yang Q."/>
            <person name="Yu C."/>
            <person name="Zafar N."/>
            <person name="Zhou L."/>
            <person name="Kuske C.R."/>
        </authorList>
    </citation>
    <scope>NUCLEOTIDE SEQUENCE [LARGE SCALE GENOMIC DNA]</scope>
    <source>
        <strain>Ellin345</strain>
    </source>
</reference>
<organism>
    <name type="scientific">Koribacter versatilis (strain Ellin345)</name>
    <dbReference type="NCBI Taxonomy" id="204669"/>
    <lineage>
        <taxon>Bacteria</taxon>
        <taxon>Pseudomonadati</taxon>
        <taxon>Acidobacteriota</taxon>
        <taxon>Terriglobia</taxon>
        <taxon>Terriglobales</taxon>
        <taxon>Candidatus Korobacteraceae</taxon>
        <taxon>Candidatus Korobacter</taxon>
    </lineage>
</organism>
<evidence type="ECO:0000255" key="1">
    <source>
        <dbReference type="HAMAP-Rule" id="MF_01678"/>
    </source>
</evidence>
<evidence type="ECO:0000305" key="2"/>
<accession>Q1ISH2</accession>